<name>C554_CERS4</name>
<proteinExistence type="evidence at protein level"/>
<protein>
    <recommendedName>
        <fullName>Cytochrome c-554</fullName>
    </recommendedName>
    <alternativeName>
        <fullName>Cytochrome c554</fullName>
    </alternativeName>
    <alternativeName>
        <fullName>High-potential cytochrome c</fullName>
    </alternativeName>
</protein>
<evidence type="ECO:0000250" key="1"/>
<evidence type="ECO:0000250" key="2">
    <source>
        <dbReference type="UniProtKB" id="P00150"/>
    </source>
</evidence>
<evidence type="ECO:0000250" key="3">
    <source>
        <dbReference type="UniProtKB" id="P0C0X7"/>
    </source>
</evidence>
<feature type="signal peptide" evidence="1">
    <location>
        <begin position="1"/>
        <end position="20"/>
    </location>
</feature>
<feature type="chain" id="PRO_0000006541" description="Cytochrome c-554">
    <location>
        <begin position="21"/>
        <end position="153"/>
    </location>
</feature>
<feature type="binding site" description="axial binding residue" evidence="2">
    <location>
        <position position="37"/>
    </location>
    <ligand>
        <name>heme c</name>
        <dbReference type="ChEBI" id="CHEBI:61717"/>
    </ligand>
    <ligandPart>
        <name>Fe</name>
        <dbReference type="ChEBI" id="CHEBI:18248"/>
    </ligandPart>
</feature>
<feature type="binding site" description="covalent" evidence="2">
    <location>
        <position position="142"/>
    </location>
    <ligand>
        <name>heme c</name>
        <dbReference type="ChEBI" id="CHEBI:61717"/>
    </ligand>
</feature>
<feature type="binding site" description="covalent" evidence="2">
    <location>
        <position position="145"/>
    </location>
    <ligand>
        <name>heme c</name>
        <dbReference type="ChEBI" id="CHEBI:61717"/>
    </ligand>
</feature>
<feature type="binding site" description="axial binding residue" evidence="2">
    <location>
        <position position="146"/>
    </location>
    <ligand>
        <name>heme c</name>
        <dbReference type="ChEBI" id="CHEBI:61717"/>
    </ligand>
    <ligandPart>
        <name>Fe</name>
        <dbReference type="ChEBI" id="CHEBI:18248"/>
    </ligandPart>
</feature>
<feature type="modified residue" description="Pyrrolidone carboxylic acid" evidence="3">
    <location>
        <position position="21"/>
    </location>
</feature>
<keyword id="KW-0903">Direct protein sequencing</keyword>
<keyword id="KW-0249">Electron transport</keyword>
<keyword id="KW-0349">Heme</keyword>
<keyword id="KW-0408">Iron</keyword>
<keyword id="KW-0479">Metal-binding</keyword>
<keyword id="KW-0574">Periplasm</keyword>
<keyword id="KW-0873">Pyrrolidone carboxylic acid</keyword>
<keyword id="KW-1185">Reference proteome</keyword>
<keyword id="KW-0732">Signal</keyword>
<keyword id="KW-0813">Transport</keyword>
<sequence>MRPIPALALTFSLVAMPALAQDARQIERMIEGRHGLMTLMAHELGKLGGMAKEETPYDAEVAGKAASNLSALASVISPELFPKGSAVGEAEDSEALPAIWEKPDDFAQKISGMEEAAAKMQAAAGTDLASLQGAMRDLGAACGSCHETYRQKD</sequence>
<comment type="function">
    <text>Monoheme c-type cytochrome, that is particularly expressed when cells generate energy via aerobic respiration.</text>
</comment>
<comment type="subcellular location">
    <subcellularLocation>
        <location>Periplasm</location>
    </subcellularLocation>
</comment>
<comment type="PTM">
    <text evidence="2">Binds 1 heme c group covalently per subunit.</text>
</comment>
<gene>
    <name type="primary">cycF</name>
    <name type="ordered locus">RHOS4_13740</name>
    <name type="ORF">RSP_2785</name>
</gene>
<reference key="1">
    <citation type="journal article" date="1995" name="J. Bacteriol.">
        <title>Organization and expression of the Rhodobacter sphaeroides cycFG operon.</title>
        <authorList>
            <person name="Flory J.E."/>
            <person name="Donohue T.J."/>
        </authorList>
    </citation>
    <scope>NUCLEOTIDE SEQUENCE [GENOMIC DNA]</scope>
    <scope>PARTIAL PROTEIN SEQUENCE</scope>
</reference>
<reference key="2">
    <citation type="submission" date="2005-09" db="EMBL/GenBank/DDBJ databases">
        <title>Complete sequence of chromosome 1 of Rhodobacter sphaeroides 2.4.1.</title>
        <authorList>
            <person name="Copeland A."/>
            <person name="Lucas S."/>
            <person name="Lapidus A."/>
            <person name="Barry K."/>
            <person name="Detter J.C."/>
            <person name="Glavina T."/>
            <person name="Hammon N."/>
            <person name="Israni S."/>
            <person name="Pitluck S."/>
            <person name="Richardson P."/>
            <person name="Mackenzie C."/>
            <person name="Choudhary M."/>
            <person name="Larimer F."/>
            <person name="Hauser L.J."/>
            <person name="Land M."/>
            <person name="Donohue T.J."/>
            <person name="Kaplan S."/>
        </authorList>
    </citation>
    <scope>NUCLEOTIDE SEQUENCE [LARGE SCALE GENOMIC DNA]</scope>
    <source>
        <strain>ATCC 17023 / DSM 158 / JCM 6121 / CCUG 31486 / LMG 2827 / NBRC 12203 / NCIMB 8253 / ATH 2.4.1.</strain>
    </source>
</reference>
<organism>
    <name type="scientific">Cereibacter sphaeroides (strain ATCC 17023 / DSM 158 / JCM 6121 / CCUG 31486 / LMG 2827 / NBRC 12203 / NCIMB 8253 / ATH 2.4.1.)</name>
    <name type="common">Rhodobacter sphaeroides</name>
    <dbReference type="NCBI Taxonomy" id="272943"/>
    <lineage>
        <taxon>Bacteria</taxon>
        <taxon>Pseudomonadati</taxon>
        <taxon>Pseudomonadota</taxon>
        <taxon>Alphaproteobacteria</taxon>
        <taxon>Rhodobacterales</taxon>
        <taxon>Paracoccaceae</taxon>
        <taxon>Cereibacter</taxon>
    </lineage>
</organism>
<accession>Q3J2P2</accession>
<accession>Q53142</accession>
<dbReference type="EMBL" id="L36880">
    <property type="protein sequence ID" value="AAD09145.1"/>
    <property type="molecule type" value="Genomic_DNA"/>
</dbReference>
<dbReference type="EMBL" id="CP000143">
    <property type="protein sequence ID" value="ABA78942.1"/>
    <property type="molecule type" value="Genomic_DNA"/>
</dbReference>
<dbReference type="RefSeq" id="WP_011337742.1">
    <property type="nucleotide sequence ID" value="NC_007493.2"/>
</dbReference>
<dbReference type="RefSeq" id="YP_352843.1">
    <property type="nucleotide sequence ID" value="NC_007493.2"/>
</dbReference>
<dbReference type="SMR" id="Q3J2P2"/>
<dbReference type="STRING" id="272943.RSP_2785"/>
<dbReference type="EnsemblBacteria" id="ABA78942">
    <property type="protein sequence ID" value="ABA78942"/>
    <property type="gene ID" value="RSP_2785"/>
</dbReference>
<dbReference type="GeneID" id="3720518"/>
<dbReference type="KEGG" id="rsp:RSP_2785"/>
<dbReference type="PATRIC" id="fig|272943.9.peg.1709"/>
<dbReference type="eggNOG" id="COG3909">
    <property type="taxonomic scope" value="Bacteria"/>
</dbReference>
<dbReference type="OrthoDB" id="7596534at2"/>
<dbReference type="PhylomeDB" id="Q3J2P2"/>
<dbReference type="Proteomes" id="UP000002703">
    <property type="component" value="Chromosome 1"/>
</dbReference>
<dbReference type="GO" id="GO:0042597">
    <property type="term" value="C:periplasmic space"/>
    <property type="evidence" value="ECO:0007669"/>
    <property type="project" value="UniProtKB-SubCell"/>
</dbReference>
<dbReference type="GO" id="GO:0009055">
    <property type="term" value="F:electron transfer activity"/>
    <property type="evidence" value="ECO:0007669"/>
    <property type="project" value="InterPro"/>
</dbReference>
<dbReference type="GO" id="GO:0020037">
    <property type="term" value="F:heme binding"/>
    <property type="evidence" value="ECO:0007669"/>
    <property type="project" value="InterPro"/>
</dbReference>
<dbReference type="GO" id="GO:0005506">
    <property type="term" value="F:iron ion binding"/>
    <property type="evidence" value="ECO:0007669"/>
    <property type="project" value="InterPro"/>
</dbReference>
<dbReference type="GO" id="GO:0022900">
    <property type="term" value="P:electron transport chain"/>
    <property type="evidence" value="ECO:0007669"/>
    <property type="project" value="InterPro"/>
</dbReference>
<dbReference type="Gene3D" id="1.20.120.10">
    <property type="entry name" value="Cytochrome c/b562"/>
    <property type="match status" value="1"/>
</dbReference>
<dbReference type="InterPro" id="IPR010980">
    <property type="entry name" value="Cyt_c/b562"/>
</dbReference>
<dbReference type="InterPro" id="IPR002321">
    <property type="entry name" value="Cyt_c_II"/>
</dbReference>
<dbReference type="InterPro" id="IPR012127">
    <property type="entry name" value="Cyt_c_prime"/>
</dbReference>
<dbReference type="InterPro" id="IPR015984">
    <property type="entry name" value="Cyt_c_prime_subgr"/>
</dbReference>
<dbReference type="Pfam" id="PF01322">
    <property type="entry name" value="Cytochrom_C_2"/>
    <property type="match status" value="1"/>
</dbReference>
<dbReference type="PIRSF" id="PIRSF000027">
    <property type="entry name" value="Cytc_c_prime"/>
    <property type="match status" value="1"/>
</dbReference>
<dbReference type="PRINTS" id="PR00608">
    <property type="entry name" value="CYTCHROMECII"/>
</dbReference>
<dbReference type="SUPFAM" id="SSF47175">
    <property type="entry name" value="Cytochromes"/>
    <property type="match status" value="1"/>
</dbReference>
<dbReference type="PROSITE" id="PS51009">
    <property type="entry name" value="CYTCII"/>
    <property type="match status" value="1"/>
</dbReference>